<accession>T0JRM4</accession>
<protein>
    <recommendedName>
        <fullName evidence="7">Manganese lipoxygenase</fullName>
        <shortName evidence="7">MnLOX</shortName>
        <ecNumber evidence="6">1.13.11.-</ecNumber>
        <ecNumber evidence="6">1.13.11.45</ecNumber>
        <ecNumber evidence="6">1.13.11.58</ecNumber>
    </recommendedName>
    <alternativeName>
        <fullName>Manganese 9S/11S-lipoxygenase</fullName>
        <shortName>9S/11S-MnLOX</shortName>
    </alternativeName>
</protein>
<gene>
    <name type="ORF">CGLO_15145</name>
</gene>
<comment type="function">
    <text evidence="6">Lipoxygenase that metabolizes linoleic and alpha-linolenic acids to 9-, 11- and 13-hydroperoxy fatty acids. Oxidizes linoleic acid to mainly 9S- and 13R-HPODE and alpha-linolenic acid to 11R-HPOTrE.</text>
</comment>
<comment type="catalytic activity">
    <reaction evidence="6">
        <text>(9Z,12Z)-octadecadienoate + O2 = (9S)-hydroperoxy-(10E,12Z)-octadecadienoate</text>
        <dbReference type="Rhea" id="RHEA:30291"/>
        <dbReference type="ChEBI" id="CHEBI:15379"/>
        <dbReference type="ChEBI" id="CHEBI:30245"/>
        <dbReference type="ChEBI" id="CHEBI:60955"/>
        <dbReference type="EC" id="1.13.11.58"/>
    </reaction>
</comment>
<comment type="catalytic activity">
    <reaction evidence="2">
        <text>(9Z,12Z)-octadecadienoate + O2 = (11S)-hydroperoxy-(9Z,12Z)-octadecadienoate</text>
        <dbReference type="Rhea" id="RHEA:18993"/>
        <dbReference type="ChEBI" id="CHEBI:15379"/>
        <dbReference type="ChEBI" id="CHEBI:30245"/>
        <dbReference type="ChEBI" id="CHEBI:57467"/>
        <dbReference type="EC" id="1.13.11.45"/>
    </reaction>
</comment>
<comment type="catalytic activity">
    <reaction evidence="6">
        <text>(9Z,12Z)-octadecadienoate + O2 = (13R)-hydroperoxy-(9Z,11E)-octadecadienoate</text>
        <dbReference type="Rhea" id="RHEA:51240"/>
        <dbReference type="ChEBI" id="CHEBI:15379"/>
        <dbReference type="ChEBI" id="CHEBI:30245"/>
        <dbReference type="ChEBI" id="CHEBI:133985"/>
    </reaction>
</comment>
<comment type="catalytic activity">
    <reaction evidence="6">
        <text>(9Z,12Z,15Z)-octadecatrienoate + O2 = (11R)-hydroperoxy-(9Z,12Z,15Z)-octadecatrienoate</text>
        <dbReference type="Rhea" id="RHEA:51252"/>
        <dbReference type="ChEBI" id="CHEBI:15379"/>
        <dbReference type="ChEBI" id="CHEBI:32387"/>
        <dbReference type="ChEBI" id="CHEBI:133989"/>
    </reaction>
</comment>
<comment type="cofactor">
    <cofactor evidence="2">
        <name>Mn(2+)</name>
        <dbReference type="ChEBI" id="CHEBI:29035"/>
    </cofactor>
    <text evidence="2">Three His residues, the carboxyl oxygen of the C-terminal Ile or Val residue, and a fifth residue, usually Asn, ligate the metal, which binds water to form a catalytic base Mn(2+)OH(2) for hydrogen abstraction.</text>
</comment>
<comment type="subcellular location">
    <subcellularLocation>
        <location evidence="2">Secreted</location>
    </subcellularLocation>
</comment>
<comment type="PTM">
    <text evidence="6">N- and O-glycosylated.</text>
</comment>
<comment type="similarity">
    <text evidence="8">Belongs to the lipoxygenase family. Manganese lipoxygenase subfamily.</text>
</comment>
<dbReference type="EC" id="1.13.11.-" evidence="6"/>
<dbReference type="EC" id="1.13.11.45" evidence="6"/>
<dbReference type="EC" id="1.13.11.58" evidence="6"/>
<dbReference type="EMBL" id="AMYD01003602">
    <property type="protein sequence ID" value="EQB45907.1"/>
    <property type="molecule type" value="Genomic_DNA"/>
</dbReference>
<dbReference type="SMR" id="T0JRM4"/>
<dbReference type="STRING" id="1237896.T0JRM4"/>
<dbReference type="eggNOG" id="ENOG502QQSP">
    <property type="taxonomic scope" value="Eukaryota"/>
</dbReference>
<dbReference type="HOGENOM" id="CLU_004282_4_0_1"/>
<dbReference type="OMA" id="MMFNAND"/>
<dbReference type="OrthoDB" id="407298at2759"/>
<dbReference type="Proteomes" id="UP000015530">
    <property type="component" value="Unassembled WGS sequence"/>
</dbReference>
<dbReference type="GO" id="GO:0005576">
    <property type="term" value="C:extracellular region"/>
    <property type="evidence" value="ECO:0007669"/>
    <property type="project" value="UniProtKB-SubCell"/>
</dbReference>
<dbReference type="GO" id="GO:0050584">
    <property type="term" value="F:linoleate 11-lipoxygenase activity"/>
    <property type="evidence" value="ECO:0000314"/>
    <property type="project" value="UniProtKB"/>
</dbReference>
<dbReference type="GO" id="GO:1990136">
    <property type="term" value="F:linoleate 9S-lipoxygenase activity"/>
    <property type="evidence" value="ECO:0000314"/>
    <property type="project" value="UniProtKB"/>
</dbReference>
<dbReference type="GO" id="GO:0046872">
    <property type="term" value="F:metal ion binding"/>
    <property type="evidence" value="ECO:0007669"/>
    <property type="project" value="UniProtKB-KW"/>
</dbReference>
<dbReference type="GO" id="GO:0043651">
    <property type="term" value="P:linoleic acid metabolic process"/>
    <property type="evidence" value="ECO:0000305"/>
    <property type="project" value="UniProtKB"/>
</dbReference>
<dbReference type="GO" id="GO:0034440">
    <property type="term" value="P:lipid oxidation"/>
    <property type="evidence" value="ECO:0007669"/>
    <property type="project" value="InterPro"/>
</dbReference>
<dbReference type="Gene3D" id="3.10.450.60">
    <property type="match status" value="1"/>
</dbReference>
<dbReference type="Gene3D" id="1.20.245.10">
    <property type="entry name" value="Lipoxygenase-1, Domain 5"/>
    <property type="match status" value="1"/>
</dbReference>
<dbReference type="InterPro" id="IPR000907">
    <property type="entry name" value="LipOase"/>
</dbReference>
<dbReference type="InterPro" id="IPR013819">
    <property type="entry name" value="LipOase_C"/>
</dbReference>
<dbReference type="InterPro" id="IPR036226">
    <property type="entry name" value="LipOase_C_sf"/>
</dbReference>
<dbReference type="PANTHER" id="PTHR11771">
    <property type="entry name" value="LIPOXYGENASE"/>
    <property type="match status" value="1"/>
</dbReference>
<dbReference type="Pfam" id="PF00305">
    <property type="entry name" value="Lipoxygenase"/>
    <property type="match status" value="1"/>
</dbReference>
<dbReference type="SUPFAM" id="SSF48484">
    <property type="entry name" value="Lipoxigenase"/>
    <property type="match status" value="1"/>
</dbReference>
<dbReference type="PROSITE" id="PS51393">
    <property type="entry name" value="LIPOXYGENASE_3"/>
    <property type="match status" value="1"/>
</dbReference>
<proteinExistence type="evidence at protein level"/>
<reference key="1">
    <citation type="journal article" date="2013" name="Mol. Plant Microbe Interact.">
        <title>Global aspects of pacC regulation of pathogenicity genes in Colletotrichum gloeosporioides as revealed by transcriptome analysis.</title>
        <authorList>
            <person name="Alkan N."/>
            <person name="Meng X."/>
            <person name="Friedlander G."/>
            <person name="Reuveni E."/>
            <person name="Sukno S."/>
            <person name="Sherman A."/>
            <person name="Thon M."/>
            <person name="Fluhr R."/>
            <person name="Prusky D."/>
        </authorList>
    </citation>
    <scope>NUCLEOTIDE SEQUENCE [LARGE SCALE GENOMIC DNA]</scope>
    <source>
        <strain>Cg-14</strain>
    </source>
</reference>
<reference key="2">
    <citation type="journal article" date="2015" name="J. Lipid Res.">
        <title>Manganese lipoxygenase of F. oxysporum and the structural basis for biosynthesis of distinct 11-hydroperoxy stereoisomers.</title>
        <authorList>
            <person name="Wennman A."/>
            <person name="Magnuson A."/>
            <person name="Hamberg M."/>
            <person name="Oliw E.H."/>
        </authorList>
    </citation>
    <scope>FUNCTION</scope>
    <scope>CATALYTIC ACTIVITY</scope>
    <scope>GLYCOSYLATION</scope>
    <scope>MUTAGENESIS OF</scope>
</reference>
<feature type="signal peptide" evidence="3">
    <location>
        <begin position="1"/>
        <end position="16"/>
    </location>
</feature>
<feature type="chain" id="PRO_5004565294" description="Manganese lipoxygenase" evidence="3">
    <location>
        <begin position="17"/>
        <end position="609"/>
    </location>
</feature>
<feature type="domain" description="Lipoxygenase" evidence="5">
    <location>
        <begin position="117"/>
        <end position="609"/>
    </location>
</feature>
<feature type="binding site" evidence="1">
    <location>
        <position position="289"/>
    </location>
    <ligand>
        <name>Mn(2+)</name>
        <dbReference type="ChEBI" id="CHEBI:29035"/>
        <note>catalytic</note>
    </ligand>
</feature>
<feature type="binding site" evidence="1">
    <location>
        <position position="294"/>
    </location>
    <ligand>
        <name>Mn(2+)</name>
        <dbReference type="ChEBI" id="CHEBI:29035"/>
        <note>catalytic</note>
    </ligand>
</feature>
<feature type="binding site" evidence="1">
    <location>
        <position position="474"/>
    </location>
    <ligand>
        <name>Mn(2+)</name>
        <dbReference type="ChEBI" id="CHEBI:29035"/>
        <note>catalytic</note>
    </ligand>
</feature>
<feature type="binding site" evidence="1">
    <location>
        <position position="478"/>
    </location>
    <ligand>
        <name>Mn(2+)</name>
        <dbReference type="ChEBI" id="CHEBI:29035"/>
        <note>catalytic</note>
    </ligand>
</feature>
<feature type="binding site" evidence="1">
    <location>
        <position position="609"/>
    </location>
    <ligand>
        <name>Mn(2+)</name>
        <dbReference type="ChEBI" id="CHEBI:29035"/>
        <note>catalytic</note>
    </ligand>
</feature>
<feature type="glycosylation site" description="N-linked (GlcNAc...) asparagine" evidence="4">
    <location>
        <position position="24"/>
    </location>
</feature>
<feature type="glycosylation site" description="N-linked (GlcNAc...) asparagine" evidence="4">
    <location>
        <position position="115"/>
    </location>
</feature>
<feature type="glycosylation site" description="N-linked (GlcNAc...) asparagine" evidence="4">
    <location>
        <position position="156"/>
    </location>
</feature>
<feature type="glycosylation site" description="N-linked (GlcNAc...) asparagine" evidence="4">
    <location>
        <position position="193"/>
    </location>
</feature>
<feature type="glycosylation site" description="N-linked (GlcNAc...) asparagine" evidence="4">
    <location>
        <position position="385"/>
    </location>
</feature>
<feature type="glycosylation site" description="N-linked (GlcNAc...) asparagine" evidence="4">
    <location>
        <position position="539"/>
    </location>
</feature>
<keyword id="KW-0223">Dioxygenase</keyword>
<keyword id="KW-0325">Glycoprotein</keyword>
<keyword id="KW-0464">Manganese</keyword>
<keyword id="KW-0479">Metal-binding</keyword>
<keyword id="KW-0560">Oxidoreductase</keyword>
<keyword id="KW-1185">Reference proteome</keyword>
<keyword id="KW-0964">Secreted</keyword>
<keyword id="KW-0732">Signal</keyword>
<sequence>MRLLLSIAGLTTVVNALAVRADGNVTSSTAVATPTAWTGFPVPTEYTLPQDDHDFQERKEEIKLKRDTITYVPSIIGETSLFIGGSVGTQIVRQEQAKWIQDLTPVQQDAFREGNASLKAIQDHGGLKTLEDYKILYDGHWSGSVPGGIAQGQFNNFTSDLLFAMERLSTNPYVVRRLNPESDKIPFSVDANNVTHLTGTTLDTLFKSGSLFLADHSYQAEYTAQDGRYSAACQALFFLDQRSGQFLPLAIKTNVGSDLVYTPLDDPNDWLLAKIMYNVNDFFHGQIYHLANSHAVAEIVNLAAIRTLSSRHPVFGLLQRLMFQAYAIRATGEIALFNPGGLFDQSFAFSNVYARKFATDFYPTVAGPFQANYFEEDLRARGLLNASYGPELPHLPFHEDGHKIINAIRTFIGTFVDTVYESDKVLAEDSELQAWIAEANGPAKVINFPSAPLNTRKQLAEILTHMAWLTGVSHHVLNQGEPFTTSGVLPLHPASLYAPVPTAKGGIKDLLPWLPNEQKSVEQISLLARFNRPKIVENNETLLHMFDVKTLLSGTGEAVKAANEQFMIAMGTISKEISTRKFDDQGLSQGMPFIWTGMDPGVIPFYLSV</sequence>
<name>MNLOX_COLGC</name>
<organism>
    <name type="scientific">Colletotrichum gloeosporioides (strain Cg-14)</name>
    <name type="common">Anthracnose fungus</name>
    <name type="synonym">Glomerella cingulata</name>
    <dbReference type="NCBI Taxonomy" id="1237896"/>
    <lineage>
        <taxon>Eukaryota</taxon>
        <taxon>Fungi</taxon>
        <taxon>Dikarya</taxon>
        <taxon>Ascomycota</taxon>
        <taxon>Pezizomycotina</taxon>
        <taxon>Sordariomycetes</taxon>
        <taxon>Hypocreomycetidae</taxon>
        <taxon>Glomerellales</taxon>
        <taxon>Glomerellaceae</taxon>
        <taxon>Colletotrichum</taxon>
        <taxon>Colletotrichum gloeosporioides species complex</taxon>
    </lineage>
</organism>
<evidence type="ECO:0000250" key="1">
    <source>
        <dbReference type="UniProtKB" id="G4NAP4"/>
    </source>
</evidence>
<evidence type="ECO:0000250" key="2">
    <source>
        <dbReference type="UniProtKB" id="Q8X151"/>
    </source>
</evidence>
<evidence type="ECO:0000255" key="3"/>
<evidence type="ECO:0000255" key="4">
    <source>
        <dbReference type="PROSITE-ProRule" id="PRU00498"/>
    </source>
</evidence>
<evidence type="ECO:0000255" key="5">
    <source>
        <dbReference type="PROSITE-ProRule" id="PRU00726"/>
    </source>
</evidence>
<evidence type="ECO:0000269" key="6">
    <source>
    </source>
</evidence>
<evidence type="ECO:0000303" key="7">
    <source>
    </source>
</evidence>
<evidence type="ECO:0000305" key="8"/>